<proteinExistence type="inferred from homology"/>
<gene>
    <name evidence="1" type="primary">rsmG</name>
    <name type="ordered locus">RPA0293</name>
</gene>
<keyword id="KW-0963">Cytoplasm</keyword>
<keyword id="KW-0489">Methyltransferase</keyword>
<keyword id="KW-0698">rRNA processing</keyword>
<keyword id="KW-0949">S-adenosyl-L-methionine</keyword>
<keyword id="KW-0808">Transferase</keyword>
<reference key="1">
    <citation type="journal article" date="2004" name="Nat. Biotechnol.">
        <title>Complete genome sequence of the metabolically versatile photosynthetic bacterium Rhodopseudomonas palustris.</title>
        <authorList>
            <person name="Larimer F.W."/>
            <person name="Chain P."/>
            <person name="Hauser L."/>
            <person name="Lamerdin J.E."/>
            <person name="Malfatti S."/>
            <person name="Do L."/>
            <person name="Land M.L."/>
            <person name="Pelletier D.A."/>
            <person name="Beatty J.T."/>
            <person name="Lang A.S."/>
            <person name="Tabita F.R."/>
            <person name="Gibson J.L."/>
            <person name="Hanson T.E."/>
            <person name="Bobst C."/>
            <person name="Torres y Torres J.L."/>
            <person name="Peres C."/>
            <person name="Harrison F.H."/>
            <person name="Gibson J."/>
            <person name="Harwood C.S."/>
        </authorList>
    </citation>
    <scope>NUCLEOTIDE SEQUENCE [LARGE SCALE GENOMIC DNA]</scope>
    <source>
        <strain>ATCC BAA-98 / CGA009</strain>
    </source>
</reference>
<comment type="function">
    <text evidence="1">Specifically methylates the N7 position of guanine in position 527 of 16S rRNA.</text>
</comment>
<comment type="catalytic activity">
    <reaction evidence="1">
        <text>guanosine(527) in 16S rRNA + S-adenosyl-L-methionine = N(7)-methylguanosine(527) in 16S rRNA + S-adenosyl-L-homocysteine</text>
        <dbReference type="Rhea" id="RHEA:42732"/>
        <dbReference type="Rhea" id="RHEA-COMP:10209"/>
        <dbReference type="Rhea" id="RHEA-COMP:10210"/>
        <dbReference type="ChEBI" id="CHEBI:57856"/>
        <dbReference type="ChEBI" id="CHEBI:59789"/>
        <dbReference type="ChEBI" id="CHEBI:74269"/>
        <dbReference type="ChEBI" id="CHEBI:74480"/>
        <dbReference type="EC" id="2.1.1.170"/>
    </reaction>
</comment>
<comment type="subcellular location">
    <subcellularLocation>
        <location evidence="1">Cytoplasm</location>
    </subcellularLocation>
</comment>
<comment type="similarity">
    <text evidence="1">Belongs to the methyltransferase superfamily. RNA methyltransferase RsmG family.</text>
</comment>
<feature type="chain" id="PRO_0000184316" description="Ribosomal RNA small subunit methyltransferase G">
    <location>
        <begin position="1"/>
        <end position="223"/>
    </location>
</feature>
<feature type="binding site" evidence="1">
    <location>
        <position position="85"/>
    </location>
    <ligand>
        <name>S-adenosyl-L-methionine</name>
        <dbReference type="ChEBI" id="CHEBI:59789"/>
    </ligand>
</feature>
<feature type="binding site" evidence="1">
    <location>
        <position position="90"/>
    </location>
    <ligand>
        <name>S-adenosyl-L-methionine</name>
        <dbReference type="ChEBI" id="CHEBI:59789"/>
    </ligand>
</feature>
<feature type="binding site" evidence="1">
    <location>
        <position position="154"/>
    </location>
    <ligand>
        <name>S-adenosyl-L-methionine</name>
        <dbReference type="ChEBI" id="CHEBI:59789"/>
    </ligand>
</feature>
<accession>Q6ND16</accession>
<name>RSMG_RHOPA</name>
<organism>
    <name type="scientific">Rhodopseudomonas palustris (strain ATCC BAA-98 / CGA009)</name>
    <dbReference type="NCBI Taxonomy" id="258594"/>
    <lineage>
        <taxon>Bacteria</taxon>
        <taxon>Pseudomonadati</taxon>
        <taxon>Pseudomonadota</taxon>
        <taxon>Alphaproteobacteria</taxon>
        <taxon>Hyphomicrobiales</taxon>
        <taxon>Nitrobacteraceae</taxon>
        <taxon>Rhodopseudomonas</taxon>
    </lineage>
</organism>
<dbReference type="EC" id="2.1.1.170" evidence="1"/>
<dbReference type="EMBL" id="BX572593">
    <property type="protein sequence ID" value="CAE25737.1"/>
    <property type="molecule type" value="Genomic_DNA"/>
</dbReference>
<dbReference type="RefSeq" id="WP_011155861.1">
    <property type="nucleotide sequence ID" value="NZ_CP116810.1"/>
</dbReference>
<dbReference type="SMR" id="Q6ND16"/>
<dbReference type="STRING" id="258594.RPA0293"/>
<dbReference type="GeneID" id="66891303"/>
<dbReference type="eggNOG" id="COG0357">
    <property type="taxonomic scope" value="Bacteria"/>
</dbReference>
<dbReference type="HOGENOM" id="CLU_065341_1_0_5"/>
<dbReference type="PhylomeDB" id="Q6ND16"/>
<dbReference type="GO" id="GO:0005829">
    <property type="term" value="C:cytosol"/>
    <property type="evidence" value="ECO:0007669"/>
    <property type="project" value="TreeGrafter"/>
</dbReference>
<dbReference type="GO" id="GO:0070043">
    <property type="term" value="F:rRNA (guanine-N7-)-methyltransferase activity"/>
    <property type="evidence" value="ECO:0007669"/>
    <property type="project" value="UniProtKB-UniRule"/>
</dbReference>
<dbReference type="Gene3D" id="3.40.50.150">
    <property type="entry name" value="Vaccinia Virus protein VP39"/>
    <property type="match status" value="1"/>
</dbReference>
<dbReference type="HAMAP" id="MF_00074">
    <property type="entry name" value="16SrRNA_methyltr_G"/>
    <property type="match status" value="1"/>
</dbReference>
<dbReference type="InterPro" id="IPR003682">
    <property type="entry name" value="rRNA_ssu_MeTfrase_G"/>
</dbReference>
<dbReference type="InterPro" id="IPR029063">
    <property type="entry name" value="SAM-dependent_MTases_sf"/>
</dbReference>
<dbReference type="NCBIfam" id="TIGR00138">
    <property type="entry name" value="rsmG_gidB"/>
    <property type="match status" value="1"/>
</dbReference>
<dbReference type="PANTHER" id="PTHR31760">
    <property type="entry name" value="S-ADENOSYL-L-METHIONINE-DEPENDENT METHYLTRANSFERASES SUPERFAMILY PROTEIN"/>
    <property type="match status" value="1"/>
</dbReference>
<dbReference type="PANTHER" id="PTHR31760:SF0">
    <property type="entry name" value="S-ADENOSYL-L-METHIONINE-DEPENDENT METHYLTRANSFERASES SUPERFAMILY PROTEIN"/>
    <property type="match status" value="1"/>
</dbReference>
<dbReference type="Pfam" id="PF02527">
    <property type="entry name" value="GidB"/>
    <property type="match status" value="1"/>
</dbReference>
<dbReference type="PIRSF" id="PIRSF003078">
    <property type="entry name" value="GidB"/>
    <property type="match status" value="1"/>
</dbReference>
<dbReference type="SUPFAM" id="SSF53335">
    <property type="entry name" value="S-adenosyl-L-methionine-dependent methyltransferases"/>
    <property type="match status" value="1"/>
</dbReference>
<protein>
    <recommendedName>
        <fullName evidence="1">Ribosomal RNA small subunit methyltransferase G</fullName>
        <ecNumber evidence="1">2.1.1.170</ecNumber>
    </recommendedName>
    <alternativeName>
        <fullName evidence="1">16S rRNA 7-methylguanosine methyltransferase</fullName>
        <shortName evidence="1">16S rRNA m7G methyltransferase</shortName>
    </alternativeName>
</protein>
<evidence type="ECO:0000255" key="1">
    <source>
        <dbReference type="HAMAP-Rule" id="MF_00074"/>
    </source>
</evidence>
<sequence>MQRAARPLVSVSDLDADKAAALKLIPIPSALEARLDAYVALLQQWQAKTNLVAPSTLPQLWTRHVADSLQLVSLMPHARRWLDFGSGGGFPGVVLACAMADVGGHVTLVERIAKKAAFLREALRVAGAPGTVILADIGDNVDRFPQALDCITARAVAPLHQLIGFAEPLMTPGTTKALFLKGQDVDAELTETTKYWKFQPKLHASVTGGQGWIVEIDHIERRT</sequence>